<sequence length="367" mass="40995">MTVTSQVKPEDEMLNWGRLILDGVSYSDMVGARDRPKEITWFDYWMSLANEYEQEAERKVALGHDLSAGELLMSAALCAQYAQFLWFDERRQKGQARKVELYQKAAPLLSPPAERHELVVDGIPMPVYVRIPEGPGPHPAVIMLGGLESTKEESFQMENLVLDRGMATATFDGPGQGEMFEYKRIAGDYEKYTSAVVDLLTKLEAIRNDAIGVLGRSLGGNYALKSAACEPRLAACISWGGFSDLDYWDLETPLTKESWKYVSKVDTLEEARLHVHAALETRDVLSQIACPTYILHGVHDEVPLSFVDTVLELVPAEHLNLVVEKDGDHCCHNLGIRPRLEMADWLYDVLVAGKKVAPTMKGWPLNG</sequence>
<feature type="chain" id="PRO_0000283735" description="2,6-dihydropseudooxynicotine hydrolase">
    <location>
        <begin position="1"/>
        <end position="367"/>
    </location>
</feature>
<feature type="active site" evidence="1 5">
    <location>
        <position position="148"/>
    </location>
</feature>
<feature type="active site" evidence="3">
    <location>
        <position position="217"/>
    </location>
</feature>
<feature type="active site" evidence="3">
    <location>
        <position position="300"/>
    </location>
</feature>
<feature type="active site" evidence="3">
    <location>
        <position position="329"/>
    </location>
</feature>
<feature type="mutagenesis site" description="Total loss of activity." evidence="3">
    <original>R</original>
    <variation>A</variation>
    <location>
        <position position="18"/>
    </location>
</feature>
<feature type="mutagenesis site" description="91% loss of activity." evidence="3">
    <original>D</original>
    <variation>A</variation>
    <location>
        <position position="22"/>
    </location>
</feature>
<feature type="mutagenesis site" description="98% loss of activity." evidence="3">
    <original>E</original>
    <variation>A</variation>
    <location>
        <position position="148"/>
    </location>
</feature>
<feature type="mutagenesis site" description="84% loss of activity." evidence="3">
    <original>S</original>
    <variation>A</variation>
    <location>
        <position position="149"/>
    </location>
</feature>
<feature type="mutagenesis site" description="32% loss of activity." evidence="3">
    <original>E</original>
    <variation>A</variation>
    <location>
        <position position="153"/>
    </location>
</feature>
<feature type="mutagenesis site" description="92% loss of activity." evidence="3">
    <original>R</original>
    <variation>A</variation>
    <location>
        <position position="216"/>
    </location>
</feature>
<feature type="mutagenesis site" description="Total loss of activity." evidence="3">
    <original>S</original>
    <variation>A</variation>
    <location>
        <position position="217"/>
    </location>
</feature>
<feature type="mutagenesis site" description="94% loss of activity." evidence="3">
    <original>D</original>
    <variation>A</variation>
    <location>
        <position position="300"/>
    </location>
</feature>
<feature type="mutagenesis site" description="92% loss of activity." evidence="3">
    <original>H</original>
    <variation>A</variation>
    <location>
        <position position="329"/>
    </location>
</feature>
<feature type="mutagenesis site" description="5% loss of activity." evidence="3">
    <original>C</original>
    <variation>A</variation>
    <location>
        <position position="330"/>
    </location>
</feature>
<feature type="mutagenesis site" description="58% loss of activity." evidence="3">
    <original>H</original>
    <variation>A</variation>
    <location>
        <position position="332"/>
    </location>
</feature>
<feature type="helix" evidence="9">
    <location>
        <begin position="9"/>
        <end position="13"/>
    </location>
</feature>
<feature type="helix" evidence="9">
    <location>
        <begin position="16"/>
        <end position="22"/>
    </location>
</feature>
<feature type="helix" evidence="9">
    <location>
        <begin position="26"/>
        <end position="33"/>
    </location>
</feature>
<feature type="helix" evidence="9">
    <location>
        <begin position="41"/>
        <end position="61"/>
    </location>
</feature>
<feature type="helix" evidence="9">
    <location>
        <begin position="65"/>
        <end position="83"/>
    </location>
</feature>
<feature type="helix" evidence="9">
    <location>
        <begin position="90"/>
        <end position="105"/>
    </location>
</feature>
<feature type="helix" evidence="9">
    <location>
        <begin position="106"/>
        <end position="108"/>
    </location>
</feature>
<feature type="strand" evidence="9">
    <location>
        <begin position="109"/>
        <end position="111"/>
    </location>
</feature>
<feature type="strand" evidence="9">
    <location>
        <begin position="113"/>
        <end position="120"/>
    </location>
</feature>
<feature type="strand" evidence="9">
    <location>
        <begin position="123"/>
        <end position="130"/>
    </location>
</feature>
<feature type="strand" evidence="9">
    <location>
        <begin position="133"/>
        <end position="135"/>
    </location>
</feature>
<feature type="strand" evidence="9">
    <location>
        <begin position="138"/>
        <end position="144"/>
    </location>
</feature>
<feature type="turn" evidence="9">
    <location>
        <begin position="151"/>
        <end position="153"/>
    </location>
</feature>
<feature type="helix" evidence="9">
    <location>
        <begin position="155"/>
        <end position="163"/>
    </location>
</feature>
<feature type="strand" evidence="9">
    <location>
        <begin position="167"/>
        <end position="171"/>
    </location>
</feature>
<feature type="helix" evidence="9">
    <location>
        <begin position="177"/>
        <end position="179"/>
    </location>
</feature>
<feature type="turn" evidence="9">
    <location>
        <begin position="180"/>
        <end position="182"/>
    </location>
</feature>
<feature type="helix" evidence="9">
    <location>
        <begin position="189"/>
        <end position="202"/>
    </location>
</feature>
<feature type="strand" evidence="9">
    <location>
        <begin position="206"/>
        <end position="216"/>
    </location>
</feature>
<feature type="helix" evidence="9">
    <location>
        <begin position="218"/>
        <end position="229"/>
    </location>
</feature>
<feature type="strand" evidence="9">
    <location>
        <begin position="235"/>
        <end position="240"/>
    </location>
</feature>
<feature type="helix" evidence="9">
    <location>
        <begin position="248"/>
        <end position="250"/>
    </location>
</feature>
<feature type="helix" evidence="9">
    <location>
        <begin position="253"/>
        <end position="262"/>
    </location>
</feature>
<feature type="helix" evidence="9">
    <location>
        <begin position="268"/>
        <end position="278"/>
    </location>
</feature>
<feature type="turn" evidence="9">
    <location>
        <begin position="282"/>
        <end position="284"/>
    </location>
</feature>
<feature type="helix" evidence="9">
    <location>
        <begin position="285"/>
        <end position="287"/>
    </location>
</feature>
<feature type="strand" evidence="9">
    <location>
        <begin position="292"/>
        <end position="297"/>
    </location>
</feature>
<feature type="strand" evidence="9">
    <location>
        <begin position="300"/>
        <end position="302"/>
    </location>
</feature>
<feature type="helix" evidence="9">
    <location>
        <begin position="305"/>
        <end position="313"/>
    </location>
</feature>
<feature type="helix" evidence="9">
    <location>
        <begin position="316"/>
        <end position="318"/>
    </location>
</feature>
<feature type="strand" evidence="9">
    <location>
        <begin position="319"/>
        <end position="324"/>
    </location>
</feature>
<feature type="helix" evidence="9">
    <location>
        <begin position="329"/>
        <end position="334"/>
    </location>
</feature>
<feature type="helix" evidence="9">
    <location>
        <begin position="337"/>
        <end position="350"/>
    </location>
</feature>
<feature type="strand" evidence="9">
    <location>
        <begin position="360"/>
        <end position="362"/>
    </location>
</feature>
<dbReference type="EC" id="3.7.1.19"/>
<dbReference type="EMBL" id="AF373840">
    <property type="protein sequence ID" value="AAK64252.1"/>
    <property type="molecule type" value="Genomic_DNA"/>
</dbReference>
<dbReference type="EMBL" id="AJ507836">
    <property type="protein sequence ID" value="CAD47941.1"/>
    <property type="molecule type" value="Genomic_DNA"/>
</dbReference>
<dbReference type="RefSeq" id="WP_016359452.1">
    <property type="nucleotide sequence ID" value="NZ_JAGINZ010000002.1"/>
</dbReference>
<dbReference type="RefSeq" id="YP_007988767.1">
    <property type="nucleotide sequence ID" value="NC_021229.1"/>
</dbReference>
<dbReference type="PDB" id="2JBW">
    <property type="method" value="X-ray"/>
    <property type="resolution" value="2.10 A"/>
    <property type="chains" value="A/B/C/D=1-365"/>
</dbReference>
<dbReference type="PDBsum" id="2JBW"/>
<dbReference type="SMR" id="Q93NG6"/>
<dbReference type="ESTHER" id="artni-Q93NG6">
    <property type="family name" value="Duf_1100-S"/>
</dbReference>
<dbReference type="MEROPS" id="S09.A77"/>
<dbReference type="GeneID" id="84020286"/>
<dbReference type="KEGG" id="ag:CAD47941"/>
<dbReference type="BRENDA" id="3.7.1.19">
    <property type="organism ID" value="449"/>
</dbReference>
<dbReference type="SABIO-RK" id="Q93NG6"/>
<dbReference type="UniPathway" id="UPA00106">
    <property type="reaction ID" value="UER00490"/>
</dbReference>
<dbReference type="EvolutionaryTrace" id="Q93NG6"/>
<dbReference type="GO" id="GO:0016787">
    <property type="term" value="F:hydrolase activity"/>
    <property type="evidence" value="ECO:0007669"/>
    <property type="project" value="UniProtKB-KW"/>
</dbReference>
<dbReference type="GO" id="GO:0009820">
    <property type="term" value="P:alkaloid metabolic process"/>
    <property type="evidence" value="ECO:0007669"/>
    <property type="project" value="UniProtKB-KW"/>
</dbReference>
<dbReference type="GO" id="GO:0019608">
    <property type="term" value="P:nicotine catabolic process"/>
    <property type="evidence" value="ECO:0007669"/>
    <property type="project" value="UniProtKB-UniPathway"/>
</dbReference>
<dbReference type="Gene3D" id="1.20.1440.110">
    <property type="entry name" value="acylaminoacyl peptidase"/>
    <property type="match status" value="1"/>
</dbReference>
<dbReference type="Gene3D" id="3.40.50.1820">
    <property type="entry name" value="alpha/beta hydrolase"/>
    <property type="match status" value="1"/>
</dbReference>
<dbReference type="InterPro" id="IPR029058">
    <property type="entry name" value="AB_hydrolase_fold"/>
</dbReference>
<dbReference type="InterPro" id="IPR010520">
    <property type="entry name" value="FrsA-like"/>
</dbReference>
<dbReference type="InterPro" id="IPR050261">
    <property type="entry name" value="FrsA_esterase"/>
</dbReference>
<dbReference type="PANTHER" id="PTHR22946:SF12">
    <property type="entry name" value="CONIDIAL PIGMENT BIOSYNTHESIS PROTEIN AYG1 (AFU_ORTHOLOGUE AFUA_2G17550)"/>
    <property type="match status" value="1"/>
</dbReference>
<dbReference type="PANTHER" id="PTHR22946">
    <property type="entry name" value="DIENELACTONE HYDROLASE DOMAIN-CONTAINING PROTEIN-RELATED"/>
    <property type="match status" value="1"/>
</dbReference>
<dbReference type="Pfam" id="PF06500">
    <property type="entry name" value="FrsA-like"/>
    <property type="match status" value="1"/>
</dbReference>
<dbReference type="SUPFAM" id="SSF53474">
    <property type="entry name" value="alpha/beta-Hydrolases"/>
    <property type="match status" value="1"/>
</dbReference>
<protein>
    <recommendedName>
        <fullName>2,6-dihydropseudooxynicotine hydrolase</fullName>
        <ecNumber>3.7.1.19</ecNumber>
    </recommendedName>
</protein>
<comment type="function">
    <text evidence="2 3">L-nicotine is used as a growth substrate. Plays a role in nicotine catabolism by cleaving a C-C bond in 2,6-dihydroxypseudooxynicotine.</text>
</comment>
<comment type="catalytic activity">
    <reaction evidence="2 3">
        <text>2,6-dihydroxypseudooxynicotine + H2O = 2,6-dihydroxypyridine + 4-(methylamino)butanoate + H(+)</text>
        <dbReference type="Rhea" id="RHEA:34167"/>
        <dbReference type="ChEBI" id="CHEBI:15377"/>
        <dbReference type="ChEBI" id="CHEBI:15378"/>
        <dbReference type="ChEBI" id="CHEBI:17681"/>
        <dbReference type="ChEBI" id="CHEBI:66882"/>
        <dbReference type="ChEBI" id="CHEBI:66944"/>
        <dbReference type="EC" id="3.7.1.19"/>
    </reaction>
</comment>
<comment type="biophysicochemical properties">
    <kinetics>
        <KM evidence="2">6 uM for 2,6-dihydropseudooxynicotine</KM>
    </kinetics>
    <phDependence>
        <text evidence="2">Optimum pH is 7.5.</text>
    </phDependence>
</comment>
<comment type="pathway">
    <text evidence="2 3 4">Alkaloid degradation; nicotine degradation; 2,6-dihydroxypyridine and 4-(methylamino)butanoate from 6-hydroxypseudooxynicotine: step 2/2.</text>
</comment>
<comment type="subunit">
    <text evidence="3">Homodimer.</text>
</comment>
<comment type="similarity">
    <text evidence="6">Belongs to the AB hydrolase superfamily.</text>
</comment>
<evidence type="ECO:0000255" key="1"/>
<evidence type="ECO:0000269" key="2">
    <source>
    </source>
</evidence>
<evidence type="ECO:0000269" key="3">
    <source>
    </source>
</evidence>
<evidence type="ECO:0000269" key="4">
    <source>
    </source>
</evidence>
<evidence type="ECO:0000303" key="5">
    <source>
    </source>
</evidence>
<evidence type="ECO:0000305" key="6"/>
<evidence type="ECO:0000312" key="7">
    <source>
        <dbReference type="EMBL" id="AAK64252.1"/>
    </source>
</evidence>
<evidence type="ECO:0000312" key="8">
    <source>
        <dbReference type="EMBL" id="CAD47941.1"/>
    </source>
</evidence>
<evidence type="ECO:0007829" key="9">
    <source>
        <dbReference type="PDB" id="2JBW"/>
    </source>
</evidence>
<accession>Q93NG6</accession>
<reference evidence="6 7" key="1">
    <citation type="journal article" date="2001" name="J. Bacteriol.">
        <title>Gene cluster on pAO1 of Arthrobacter nicotinovorans involved in degradation of the plant alkaloid nicotine: cloning, purification, and characterization of 2,6-dihydroxypyridine 3-hydroxylase.</title>
        <authorList>
            <person name="Baitsch D."/>
            <person name="Sandu C."/>
            <person name="Brandsch R."/>
            <person name="Igloi G.L."/>
        </authorList>
    </citation>
    <scope>NUCLEOTIDE SEQUENCE [GENOMIC DNA]</scope>
</reference>
<reference evidence="8" key="2">
    <citation type="journal article" date="2003" name="J. Bacteriol.">
        <title>Sequence of the 165-kilobase catabolic plasmid pAO1 from Arthrobacter nicotinovorans and identification of a pAO1-dependent nicotine uptake system.</title>
        <authorList>
            <person name="Igloi G.L."/>
            <person name="Brandsch R."/>
        </authorList>
    </citation>
    <scope>NUCLEOTIDE SEQUENCE [GENOMIC DNA]</scope>
</reference>
<reference evidence="6" key="3">
    <citation type="journal article" date="1965" name="J. Biol. Chem.">
        <title>The bacterial oxidation of nicotine. VI. The metabolism of 2,6-dihydroxypseudooxynicotine.</title>
        <authorList>
            <person name="Gherna R.L."/>
            <person name="Richardson S.H."/>
            <person name="Rittenberg S.C."/>
        </authorList>
    </citation>
    <scope>PATHWAY</scope>
</reference>
<reference evidence="6" key="4">
    <citation type="journal article" date="2005" name="J. Bacteriol.">
        <title>An alpha/beta-fold C--C bond hydrolase is involved in a central step of nicotine catabolism by Arthrobacter nicotinovorans.</title>
        <authorList>
            <person name="Sachelaru P."/>
            <person name="Schiltz E."/>
            <person name="Igloi G.L."/>
            <person name="Brandsch R."/>
        </authorList>
    </citation>
    <scope>FUNCTION</scope>
    <scope>CATALYTIC ACTIVITY</scope>
    <scope>BIOPHYSICOCHEMICAL PROPERTIES</scope>
    <scope>PATHWAY</scope>
</reference>
<reference evidence="6" key="5">
    <citation type="journal article" date="2007" name="J. Mol. Biol.">
        <title>Structure and action of a C-C bond cleaving alpha/beta-hydrolase involved in nicotine degradation.</title>
        <authorList>
            <person name="Schleberger C."/>
            <person name="Sachelaru P."/>
            <person name="Brandsch R."/>
            <person name="Schulz G.E."/>
        </authorList>
    </citation>
    <scope>X-RAY CRYSTALLOGRAPHY (2.1 ANGSTROMS)</scope>
    <scope>FUNCTION</scope>
    <scope>CATALYTIC ACTIVITY</scope>
    <scope>PATHWAY</scope>
    <scope>SUBUNIT</scope>
    <scope>ACTIVE SITE</scope>
    <scope>MUTAGENESIS OF ARG-18; ASP-22; GLU-148; SER-149; GLU-153; ARG-216; SER-217; ASP-300; HIS-329; CYS-330 AND HIS-332</scope>
</reference>
<name>DHPON_PAENI</name>
<organism>
    <name type="scientific">Paenarthrobacter nicotinovorans</name>
    <name type="common">Arthrobacter nicotinovorans</name>
    <dbReference type="NCBI Taxonomy" id="29320"/>
    <lineage>
        <taxon>Bacteria</taxon>
        <taxon>Bacillati</taxon>
        <taxon>Actinomycetota</taxon>
        <taxon>Actinomycetes</taxon>
        <taxon>Micrococcales</taxon>
        <taxon>Micrococcaceae</taxon>
        <taxon>Paenarthrobacter</taxon>
    </lineage>
</organism>
<geneLocation type="plasmid" evidence="8">
    <name>pAO1</name>
</geneLocation>
<proteinExistence type="evidence at protein level"/>
<keyword id="KW-0002">3D-structure</keyword>
<keyword id="KW-0017">Alkaloid metabolism</keyword>
<keyword id="KW-0378">Hydrolase</keyword>
<keyword id="KW-0614">Plasmid</keyword>